<organism>
    <name type="scientific">Homo sapiens</name>
    <name type="common">Human</name>
    <dbReference type="NCBI Taxonomy" id="9606"/>
    <lineage>
        <taxon>Eukaryota</taxon>
        <taxon>Metazoa</taxon>
        <taxon>Chordata</taxon>
        <taxon>Craniata</taxon>
        <taxon>Vertebrata</taxon>
        <taxon>Euteleostomi</taxon>
        <taxon>Mammalia</taxon>
        <taxon>Eutheria</taxon>
        <taxon>Euarchontoglires</taxon>
        <taxon>Primates</taxon>
        <taxon>Haplorrhini</taxon>
        <taxon>Catarrhini</taxon>
        <taxon>Hominidae</taxon>
        <taxon>Homo</taxon>
    </lineage>
</organism>
<dbReference type="EMBL" id="AB057723">
    <property type="protein sequence ID" value="BAB60853.1"/>
    <property type="molecule type" value="mRNA"/>
</dbReference>
<dbReference type="EMBL" id="AY359112">
    <property type="protein sequence ID" value="AAQ89470.1"/>
    <property type="molecule type" value="mRNA"/>
</dbReference>
<dbReference type="EMBL" id="BC069228">
    <property type="protein sequence ID" value="AAH69228.1"/>
    <property type="molecule type" value="mRNA"/>
</dbReference>
<dbReference type="CCDS" id="CCDS11235.1">
    <molecule id="Q96S52-1"/>
</dbReference>
<dbReference type="RefSeq" id="NP_149975.1">
    <molecule id="Q96S52-1"/>
    <property type="nucleotide sequence ID" value="NM_033198.4"/>
</dbReference>
<dbReference type="PDB" id="7W72">
    <property type="method" value="EM"/>
    <property type="resolution" value="3.10 A"/>
    <property type="chains" value="S=7-539"/>
</dbReference>
<dbReference type="PDB" id="7WLD">
    <property type="method" value="EM"/>
    <property type="resolution" value="2.53 A"/>
    <property type="chains" value="S=2-555"/>
</dbReference>
<dbReference type="PDB" id="8IMX">
    <property type="method" value="EM"/>
    <property type="resolution" value="2.85 A"/>
    <property type="chains" value="S=2-555"/>
</dbReference>
<dbReference type="PDB" id="8IMY">
    <property type="method" value="EM"/>
    <property type="resolution" value="3.22 A"/>
    <property type="chains" value="S=2-555"/>
</dbReference>
<dbReference type="PDBsum" id="7W72"/>
<dbReference type="PDBsum" id="7WLD"/>
<dbReference type="PDBsum" id="8IMX"/>
<dbReference type="PDBsum" id="8IMY"/>
<dbReference type="EMDB" id="EMD-32336"/>
<dbReference type="EMDB" id="EMD-32582"/>
<dbReference type="SMR" id="Q96S52"/>
<dbReference type="BioGRID" id="125082">
    <property type="interactions" value="187"/>
</dbReference>
<dbReference type="ComplexPortal" id="CPX-6503">
    <property type="entry name" value="GPI-anchor transamidase complex"/>
</dbReference>
<dbReference type="CORUM" id="Q96S52"/>
<dbReference type="FunCoup" id="Q96S52">
    <property type="interactions" value="1890"/>
</dbReference>
<dbReference type="IntAct" id="Q96S52">
    <property type="interactions" value="92"/>
</dbReference>
<dbReference type="MINT" id="Q96S52"/>
<dbReference type="STRING" id="9606.ENSP00000309430"/>
<dbReference type="GlyConnect" id="1285">
    <property type="glycosylation" value="1 N-Linked glycan (1 site)"/>
</dbReference>
<dbReference type="GlyCosmos" id="Q96S52">
    <property type="glycosylation" value="3 sites, 2 glycans"/>
</dbReference>
<dbReference type="GlyGen" id="Q96S52">
    <property type="glycosylation" value="5 sites, 6 N-linked glycans (1 site), 1 O-linked glycan (2 sites)"/>
</dbReference>
<dbReference type="iPTMnet" id="Q96S52"/>
<dbReference type="PhosphoSitePlus" id="Q96S52"/>
<dbReference type="SwissPalm" id="Q96S52"/>
<dbReference type="BioMuta" id="PIGS"/>
<dbReference type="DMDM" id="21759353"/>
<dbReference type="jPOST" id="Q96S52"/>
<dbReference type="MassIVE" id="Q96S52"/>
<dbReference type="PaxDb" id="9606-ENSP00000309430"/>
<dbReference type="PeptideAtlas" id="Q96S52"/>
<dbReference type="ProteomicsDB" id="78065">
    <molecule id="Q96S52-1"/>
</dbReference>
<dbReference type="ProteomicsDB" id="78066">
    <molecule id="Q96S52-2"/>
</dbReference>
<dbReference type="Pumba" id="Q96S52"/>
<dbReference type="Antibodypedia" id="2984">
    <property type="antibodies" value="115 antibodies from 23 providers"/>
</dbReference>
<dbReference type="DNASU" id="94005"/>
<dbReference type="Ensembl" id="ENST00000308360.8">
    <molecule id="Q96S52-1"/>
    <property type="protein sequence ID" value="ENSP00000309430.7"/>
    <property type="gene ID" value="ENSG00000087111.22"/>
</dbReference>
<dbReference type="Ensembl" id="ENST00000395346.6">
    <molecule id="Q96S52-2"/>
    <property type="protein sequence ID" value="ENSP00000378755.2"/>
    <property type="gene ID" value="ENSG00000087111.22"/>
</dbReference>
<dbReference type="GeneID" id="94005"/>
<dbReference type="KEGG" id="hsa:94005"/>
<dbReference type="MANE-Select" id="ENST00000308360.8">
    <property type="protein sequence ID" value="ENSP00000309430.7"/>
    <property type="RefSeq nucleotide sequence ID" value="NM_033198.4"/>
    <property type="RefSeq protein sequence ID" value="NP_149975.1"/>
</dbReference>
<dbReference type="UCSC" id="uc002hbn.3">
    <molecule id="Q96S52-1"/>
    <property type="organism name" value="human"/>
</dbReference>
<dbReference type="AGR" id="HGNC:14937"/>
<dbReference type="CTD" id="94005"/>
<dbReference type="DisGeNET" id="94005"/>
<dbReference type="GeneCards" id="PIGS"/>
<dbReference type="HGNC" id="HGNC:14937">
    <property type="gene designation" value="PIGS"/>
</dbReference>
<dbReference type="HPA" id="ENSG00000087111">
    <property type="expression patterns" value="Low tissue specificity"/>
</dbReference>
<dbReference type="MalaCards" id="PIGS"/>
<dbReference type="MIM" id="610271">
    <property type="type" value="gene"/>
</dbReference>
<dbReference type="MIM" id="618143">
    <property type="type" value="phenotype"/>
</dbReference>
<dbReference type="neXtProt" id="NX_Q96S52"/>
<dbReference type="OpenTargets" id="ENSG00000087111"/>
<dbReference type="PharmGKB" id="PA33301"/>
<dbReference type="VEuPathDB" id="HostDB:ENSG00000087111"/>
<dbReference type="eggNOG" id="KOG2459">
    <property type="taxonomic scope" value="Eukaryota"/>
</dbReference>
<dbReference type="GeneTree" id="ENSGT00390000017203"/>
<dbReference type="HOGENOM" id="CLU_010026_3_0_1"/>
<dbReference type="InParanoid" id="Q96S52"/>
<dbReference type="OMA" id="AEHKYAV"/>
<dbReference type="OrthoDB" id="28748at2759"/>
<dbReference type="PAN-GO" id="Q96S52">
    <property type="GO annotations" value="2 GO annotations based on evolutionary models"/>
</dbReference>
<dbReference type="PhylomeDB" id="Q96S52"/>
<dbReference type="TreeFam" id="TF105857"/>
<dbReference type="PathwayCommons" id="Q96S52"/>
<dbReference type="Reactome" id="R-HSA-162791">
    <property type="pathway name" value="Attachment of GPI anchor to uPAR"/>
</dbReference>
<dbReference type="SignaLink" id="Q96S52"/>
<dbReference type="SIGNOR" id="Q96S52"/>
<dbReference type="UniPathway" id="UPA00196"/>
<dbReference type="BioGRID-ORCS" id="94005">
    <property type="hits" value="95 hits in 1176 CRISPR screens"/>
</dbReference>
<dbReference type="ChiTaRS" id="PIGS">
    <property type="organism name" value="human"/>
</dbReference>
<dbReference type="GeneWiki" id="PIGS_(gene)"/>
<dbReference type="GenomeRNAi" id="94005"/>
<dbReference type="Pharos" id="Q96S52">
    <property type="development level" value="Tdark"/>
</dbReference>
<dbReference type="PRO" id="PR:Q96S52"/>
<dbReference type="Proteomes" id="UP000005640">
    <property type="component" value="Chromosome 17"/>
</dbReference>
<dbReference type="RNAct" id="Q96S52">
    <property type="molecule type" value="protein"/>
</dbReference>
<dbReference type="Bgee" id="ENSG00000087111">
    <property type="expression patterns" value="Expressed in stromal cell of endometrium and 101 other cell types or tissues"/>
</dbReference>
<dbReference type="ExpressionAtlas" id="Q96S52">
    <property type="expression patterns" value="baseline and differential"/>
</dbReference>
<dbReference type="GO" id="GO:0005789">
    <property type="term" value="C:endoplasmic reticulum membrane"/>
    <property type="evidence" value="ECO:0000304"/>
    <property type="project" value="Reactome"/>
</dbReference>
<dbReference type="GO" id="GO:0042765">
    <property type="term" value="C:GPI-anchor transamidase complex"/>
    <property type="evidence" value="ECO:0000314"/>
    <property type="project" value="UniProtKB"/>
</dbReference>
<dbReference type="GO" id="GO:0016020">
    <property type="term" value="C:membrane"/>
    <property type="evidence" value="ECO:0007005"/>
    <property type="project" value="UniProtKB"/>
</dbReference>
<dbReference type="GO" id="GO:0016255">
    <property type="term" value="P:attachment of GPI anchor to protein"/>
    <property type="evidence" value="ECO:0000314"/>
    <property type="project" value="UniProtKB"/>
</dbReference>
<dbReference type="GO" id="GO:0006506">
    <property type="term" value="P:GPI anchor biosynthetic process"/>
    <property type="evidence" value="ECO:0007669"/>
    <property type="project" value="UniProtKB-UniPathway"/>
</dbReference>
<dbReference type="GO" id="GO:0180046">
    <property type="term" value="P:GPI anchored protein biosynthesis"/>
    <property type="evidence" value="ECO:0000314"/>
    <property type="project" value="UniProtKB"/>
</dbReference>
<dbReference type="InterPro" id="IPR019540">
    <property type="entry name" value="PtdIno-glycan_biosynth_class_S"/>
</dbReference>
<dbReference type="PANTHER" id="PTHR21072">
    <property type="entry name" value="GPI TRANSAMIDASE COMPONENT PIG-S"/>
    <property type="match status" value="1"/>
</dbReference>
<dbReference type="PANTHER" id="PTHR21072:SF13">
    <property type="entry name" value="GPI TRANSAMIDASE COMPONENT PIG-S"/>
    <property type="match status" value="1"/>
</dbReference>
<dbReference type="Pfam" id="PF10510">
    <property type="entry name" value="PIG-S"/>
    <property type="match status" value="1"/>
</dbReference>
<accession>Q96S52</accession>
<accession>Q6UVX6</accession>
<protein>
    <recommendedName>
        <fullName evidence="10">GPI-anchor transamidase component PIGS</fullName>
    </recommendedName>
    <alternativeName>
        <fullName>Phosphatidylinositol-glycan biosynthesis class S protein</fullName>
    </alternativeName>
</protein>
<name>PIGS_HUMAN</name>
<proteinExistence type="evidence at protein level"/>
<keyword id="KW-0002">3D-structure</keyword>
<keyword id="KW-0025">Alternative splicing</keyword>
<keyword id="KW-0903">Direct protein sequencing</keyword>
<keyword id="KW-0225">Disease variant</keyword>
<keyword id="KW-0256">Endoplasmic reticulum</keyword>
<keyword id="KW-0887">Epilepsy</keyword>
<keyword id="KW-0325">Glycoprotein</keyword>
<keyword id="KW-0337">GPI-anchor biosynthesis</keyword>
<keyword id="KW-0472">Membrane</keyword>
<keyword id="KW-1267">Proteomics identification</keyword>
<keyword id="KW-1185">Reference proteome</keyword>
<keyword id="KW-0812">Transmembrane</keyword>
<keyword id="KW-1133">Transmembrane helix</keyword>
<feature type="initiator methionine" description="Removed" evidence="2">
    <location>
        <position position="1"/>
    </location>
</feature>
<feature type="chain" id="PRO_0000218604" description="GPI-anchor transamidase component PIGS">
    <location>
        <begin position="2"/>
        <end position="555"/>
    </location>
</feature>
<feature type="topological domain" description="Cytoplasmic" evidence="10">
    <location>
        <begin position="2"/>
        <end position="18"/>
    </location>
</feature>
<feature type="transmembrane region" description="Helical" evidence="6 7 15 16">
    <location>
        <begin position="19"/>
        <end position="39"/>
    </location>
</feature>
<feature type="topological domain" description="Lumenal" evidence="10">
    <location>
        <begin position="40"/>
        <end position="517"/>
    </location>
</feature>
<feature type="transmembrane region" description="Helical" evidence="6 7 15 16">
    <location>
        <begin position="518"/>
        <end position="532"/>
    </location>
</feature>
<feature type="topological domain" description="Cytoplasmic" evidence="10">
    <location>
        <begin position="533"/>
        <end position="555"/>
    </location>
</feature>
<feature type="binding site" evidence="8 17 18">
    <location>
        <position position="15"/>
    </location>
    <ligand>
        <name>a cardiolipin</name>
        <dbReference type="ChEBI" id="CHEBI:62237"/>
    </ligand>
</feature>
<feature type="binding site" evidence="8 17 18">
    <location>
        <position position="18"/>
    </location>
    <ligand>
        <name>a cardiolipin</name>
        <dbReference type="ChEBI" id="CHEBI:62237"/>
    </ligand>
</feature>
<feature type="glycosylation site" description="N-linked (GlcNAc...) asparagine" evidence="6 7 8 14 15 17 18">
    <location>
        <position position="267"/>
    </location>
</feature>
<feature type="glycosylation site" description="N-linked (GlcNAc...) asparagine" evidence="1">
    <location>
        <position position="370"/>
    </location>
</feature>
<feature type="splice variant" id="VSP_013158" description="In isoform 2." evidence="9">
    <original>MAAAGAAATHL</original>
    <variation>MPS</variation>
    <location>
        <begin position="1"/>
        <end position="11"/>
    </location>
</feature>
<feature type="sequence variant" id="VAR_081579" description="In GPIBD18; partial loss of function; when tested in PIGS-knockout cells, mediates partial restoration of GPI-anchored protein expression at the cell surface; dbSNP:rs1567618413." evidence="4">
    <original>L</original>
    <variation>P</variation>
    <location>
        <position position="34"/>
    </location>
</feature>
<feature type="sequence variant" id="VAR_081580" description="In GPIBD18; almost complete loss of function; when tested in PIGS-knockout cells, mediates only very partial restoration of GPI-anchored protein expression at the cell surface; strong decrease in protein level, possibly due to nonsense-mediated mRNA decay." evidence="4">
    <location>
        <begin position="36"/>
        <end position="555"/>
    </location>
</feature>
<feature type="sequence variant" id="VAR_036510" description="In a breast cancer sample; somatic mutation." evidence="3">
    <original>M</original>
    <variation>I</variation>
    <location>
        <position position="159"/>
    </location>
</feature>
<feature type="sequence variant" id="VAR_053582" description="In dbSNP:rs34669811.">
    <original>R</original>
    <variation>H</variation>
    <location>
        <position position="253"/>
    </location>
</feature>
<feature type="sequence variant" id="VAR_081581" description="In GPIBD18; dbSNP:rs1426262136." evidence="4">
    <original>E</original>
    <variation>G</variation>
    <location>
        <position position="308"/>
    </location>
</feature>
<feature type="sequence variant" id="VAR_081582" description="In GPIBD18; uncertain significance." evidence="4">
    <original>TTTLTSLAQLLGK</original>
    <variation>RLL</variation>
    <location>
        <begin position="439"/>
        <end position="451"/>
    </location>
</feature>
<feature type="mutagenesis site" description="No effect on function in GPI-anchor attachment to protein." evidence="5">
    <original>R</original>
    <variation>A</variation>
    <location>
        <position position="43"/>
    </location>
</feature>
<feature type="mutagenesis site" description="No effect on function in GPI-anchor attachment to protein." evidence="5">
    <original>P</original>
    <variation>A</variation>
    <location>
        <position position="47"/>
    </location>
</feature>
<feature type="mutagenesis site" description="No effect on function in GPI-anchor attachment to protein." evidence="5">
    <original>N</original>
    <variation>Q</variation>
    <location>
        <position position="267"/>
    </location>
</feature>
<feature type="mutagenesis site" description="No effect on function in GPI-anchor attachment to protein." evidence="5">
    <original>S</original>
    <variation>A</variation>
    <location>
        <position position="272"/>
    </location>
</feature>
<feature type="mutagenesis site" description="No effect on function in GPI-anchor attachment to protein." evidence="5">
    <original>Y</original>
    <variation>A</variation>
    <location>
        <position position="276"/>
    </location>
</feature>
<feature type="mutagenesis site" description="No effect on function in GPI-anchor attachment to protein." evidence="5">
    <original>P</original>
    <variation>A</variation>
    <location>
        <position position="301"/>
    </location>
</feature>
<feature type="mutagenesis site" description="No effect on function in GPI-anchor attachment to protein." evidence="5">
    <original>P</original>
    <variation>A</variation>
    <location>
        <position position="335"/>
    </location>
</feature>
<feature type="mutagenesis site" description="No effect on function in GPI-anchor attachment to protein." evidence="5">
    <original>N</original>
    <variation>Q</variation>
    <location>
        <position position="370"/>
    </location>
</feature>
<feature type="mutagenesis site" description="No effect on function in GPI-anchor attachment to protein." evidence="5">
    <original>S</original>
    <variation>A</variation>
    <location>
        <position position="444"/>
    </location>
</feature>
<feature type="mutagenesis site" description="No effect on function in GPI-anchor attachment to protein." evidence="5">
    <original>DD</original>
    <variation>AA</variation>
    <location>
        <begin position="459"/>
        <end position="460"/>
    </location>
</feature>
<feature type="mutagenesis site" description="No effect on function in GPI-anchor attachment to protein." evidence="5">
    <original>DD</original>
    <variation>AA</variation>
    <location>
        <begin position="515"/>
        <end position="516"/>
    </location>
</feature>
<feature type="helix" evidence="20">
    <location>
        <begin position="4"/>
        <end position="38"/>
    </location>
</feature>
<feature type="helix" evidence="20">
    <location>
        <begin position="48"/>
        <end position="54"/>
    </location>
</feature>
<feature type="strand" evidence="20">
    <location>
        <begin position="58"/>
        <end position="69"/>
    </location>
</feature>
<feature type="turn" evidence="20">
    <location>
        <begin position="71"/>
        <end position="73"/>
    </location>
</feature>
<feature type="helix" evidence="20">
    <location>
        <begin position="78"/>
        <end position="81"/>
    </location>
</feature>
<feature type="strand" evidence="20">
    <location>
        <begin position="85"/>
        <end position="92"/>
    </location>
</feature>
<feature type="strand" evidence="21">
    <location>
        <begin position="95"/>
        <end position="97"/>
    </location>
</feature>
<feature type="strand" evidence="20">
    <location>
        <begin position="99"/>
        <end position="107"/>
    </location>
</feature>
<feature type="helix" evidence="20">
    <location>
        <begin position="113"/>
        <end position="120"/>
    </location>
</feature>
<feature type="helix" evidence="20">
    <location>
        <begin position="124"/>
        <end position="131"/>
    </location>
</feature>
<feature type="strand" evidence="21">
    <location>
        <begin position="134"/>
        <end position="136"/>
    </location>
</feature>
<feature type="strand" evidence="20">
    <location>
        <begin position="142"/>
        <end position="147"/>
    </location>
</feature>
<feature type="strand" evidence="20">
    <location>
        <begin position="152"/>
        <end position="154"/>
    </location>
</feature>
<feature type="strand" evidence="20">
    <location>
        <begin position="159"/>
        <end position="162"/>
    </location>
</feature>
<feature type="turn" evidence="22">
    <location>
        <begin position="164"/>
        <end position="166"/>
    </location>
</feature>
<feature type="strand" evidence="20">
    <location>
        <begin position="168"/>
        <end position="171"/>
    </location>
</feature>
<feature type="helix" evidence="20">
    <location>
        <begin position="180"/>
        <end position="192"/>
    </location>
</feature>
<feature type="turn" evidence="20">
    <location>
        <begin position="197"/>
        <end position="200"/>
    </location>
</feature>
<feature type="strand" evidence="19">
    <location>
        <begin position="205"/>
        <end position="208"/>
    </location>
</feature>
<feature type="turn" evidence="20">
    <location>
        <begin position="212"/>
        <end position="215"/>
    </location>
</feature>
<feature type="helix" evidence="20">
    <location>
        <begin position="216"/>
        <end position="218"/>
    </location>
</feature>
<feature type="strand" evidence="20">
    <location>
        <begin position="225"/>
        <end position="236"/>
    </location>
</feature>
<feature type="turn" evidence="20">
    <location>
        <begin position="238"/>
        <end position="240"/>
    </location>
</feature>
<feature type="strand" evidence="20">
    <location>
        <begin position="241"/>
        <end position="244"/>
    </location>
</feature>
<feature type="helix" evidence="20">
    <location>
        <begin position="247"/>
        <end position="253"/>
    </location>
</feature>
<feature type="helix" evidence="20">
    <location>
        <begin position="255"/>
        <end position="262"/>
    </location>
</feature>
<feature type="turn" evidence="20">
    <location>
        <begin position="263"/>
        <end position="265"/>
    </location>
</feature>
<feature type="strand" evidence="20">
    <location>
        <begin position="267"/>
        <end position="277"/>
    </location>
</feature>
<feature type="strand" evidence="20">
    <location>
        <begin position="285"/>
        <end position="287"/>
    </location>
</feature>
<feature type="turn" evidence="20">
    <location>
        <begin position="288"/>
        <end position="291"/>
    </location>
</feature>
<feature type="strand" evidence="20">
    <location>
        <begin position="292"/>
        <end position="295"/>
    </location>
</feature>
<feature type="turn" evidence="20">
    <location>
        <begin position="297"/>
        <end position="299"/>
    </location>
</feature>
<feature type="helix" evidence="20">
    <location>
        <begin position="300"/>
        <end position="302"/>
    </location>
</feature>
<feature type="turn" evidence="20">
    <location>
        <begin position="305"/>
        <end position="307"/>
    </location>
</feature>
<feature type="helix" evidence="20">
    <location>
        <begin position="308"/>
        <end position="311"/>
    </location>
</feature>
<feature type="strand" evidence="20">
    <location>
        <begin position="317"/>
        <end position="319"/>
    </location>
</feature>
<feature type="strand" evidence="20">
    <location>
        <begin position="321"/>
        <end position="327"/>
    </location>
</feature>
<feature type="helix" evidence="20">
    <location>
        <begin position="331"/>
        <end position="333"/>
    </location>
</feature>
<feature type="strand" evidence="20">
    <location>
        <begin position="335"/>
        <end position="339"/>
    </location>
</feature>
<feature type="strand" evidence="20">
    <location>
        <begin position="341"/>
        <end position="343"/>
    </location>
</feature>
<feature type="strand" evidence="20">
    <location>
        <begin position="350"/>
        <end position="353"/>
    </location>
</feature>
<feature type="turn" evidence="20">
    <location>
        <begin position="354"/>
        <end position="356"/>
    </location>
</feature>
<feature type="strand" evidence="20">
    <location>
        <begin position="357"/>
        <end position="361"/>
    </location>
</feature>
<feature type="helix" evidence="20">
    <location>
        <begin position="367"/>
        <end position="370"/>
    </location>
</feature>
<feature type="strand" evidence="20">
    <location>
        <begin position="372"/>
        <end position="379"/>
    </location>
</feature>
<feature type="helix" evidence="20">
    <location>
        <begin position="382"/>
        <end position="396"/>
    </location>
</feature>
<feature type="strand" evidence="20">
    <location>
        <begin position="408"/>
        <end position="410"/>
    </location>
</feature>
<feature type="helix" evidence="20">
    <location>
        <begin position="415"/>
        <end position="417"/>
    </location>
</feature>
<feature type="helix" evidence="20">
    <location>
        <begin position="420"/>
        <end position="451"/>
    </location>
</feature>
<feature type="helix" evidence="20">
    <location>
        <begin position="459"/>
        <end position="481"/>
    </location>
</feature>
<feature type="helix" evidence="20">
    <location>
        <begin position="484"/>
        <end position="502"/>
    </location>
</feature>
<feature type="helix" evidence="20">
    <location>
        <begin position="505"/>
        <end position="507"/>
    </location>
</feature>
<feature type="helix" evidence="20">
    <location>
        <begin position="509"/>
        <end position="511"/>
    </location>
</feature>
<feature type="helix" evidence="20">
    <location>
        <begin position="515"/>
        <end position="517"/>
    </location>
</feature>
<feature type="helix" evidence="20">
    <location>
        <begin position="518"/>
        <end position="522"/>
    </location>
</feature>
<feature type="helix" evidence="20">
    <location>
        <begin position="523"/>
        <end position="525"/>
    </location>
</feature>
<feature type="helix" evidence="20">
    <location>
        <begin position="527"/>
        <end position="530"/>
    </location>
</feature>
<sequence length="555" mass="61656">MAAAGAAATHLEVARGKRAALFFAAVAIVLGLPLWWKTTETYRASLPYSQISGLNALQLRLMVPVTVVFTRESVPLDDQEKLPFTVVHEREIPLKYKMKIKCRFQKAYRRALDHEEEALSSGSVQEAEAMLDEPQEQAEGSLTVYVISEHSSLLPQDMMSYIGPKRTAVVRGIMHREAFNIIGRRIVQVAQAMSLTEDVLAAALADHLPEDKWSAEKRRPLKSSLGYEITFSLLNPDPKSHDVYWDIEGAVRRYVQPFLNALGAAGNFSVDSQILYYAMLGVNPRFDSASSSYYLDMHSLPHVINPVESRLGSSAASLYPVLNFLLYVPELAHSPLYIQDKDGAPVATNAFHSPRWGGIMVYNVDSKTYNASVLPVRVEVDMVRVMEVFLAQLRLLFGIAQPQLPPKCLLSGPTSEGLMTWELDRLLWARSVENLATATTTLTSLAQLLGKISNIVIKDDVASEVYKAVAAVQKSAEELASGHLASAFVASQEAVTSSELAFFDPSLLHLLYFPDDQKFAIYIPLFLPMAVPILLSLVKIFLETRKSWRKPEKTD</sequence>
<comment type="function">
    <text evidence="2 4 5 6 7 8">Component of the glycosylphosphatidylinositol-anchor (GPI-anchor) transamidase (GPI-T) complex that catalyzes the formation of the linkage between a proprotein and a GPI-anchor and participates in GPI anchored protein biosynthesis.</text>
</comment>
<comment type="pathway">
    <text evidence="2 4 5 6 7 8">Glycolipid biosynthesis; glycosylphosphatidylinositol-anchor biosynthesis.</text>
</comment>
<comment type="subunit">
    <text evidence="2 5 6 7 8">Heteropentamer (PubMed:35551457). Part of the GPI-anchor transamidase complex, consisting of PIGK, PIGT, PIGS, PIGU and GAA1 (PubMed:11483512, PubMed:34576938, PubMed:35165458, PubMed:35551457, PubMed:37684232).</text>
</comment>
<comment type="interaction">
    <interactant intactId="EBI-2908273">
        <id>Q96S52</id>
    </interactant>
    <interactant intactId="EBI-10171697">
        <id>Q6A162</id>
        <label>KRT40</label>
    </interactant>
    <organismsDiffer>false</organismsDiffer>
    <experiments>3</experiments>
</comment>
<comment type="interaction">
    <interactant intactId="EBI-2908273">
        <id>Q96S52</id>
    </interactant>
    <interactant intactId="EBI-11749135">
        <id>Q8IUG1</id>
        <label>KRTAP1-3</label>
    </interactant>
    <organismsDiffer>false</organismsDiffer>
    <experiments>3</experiments>
</comment>
<comment type="interaction">
    <interactant intactId="EBI-2908273">
        <id>Q96S52</id>
    </interactant>
    <interactant intactId="EBI-10171774">
        <id>P60410</id>
        <label>KRTAP10-8</label>
    </interactant>
    <organismsDiffer>false</organismsDiffer>
    <experiments>3</experiments>
</comment>
<comment type="interaction">
    <interactant intactId="EBI-2908273">
        <id>Q96S52</id>
    </interactant>
    <interactant intactId="EBI-10172052">
        <id>P60411</id>
        <label>KRTAP10-9</label>
    </interactant>
    <organismsDiffer>false</organismsDiffer>
    <experiments>3</experiments>
</comment>
<comment type="interaction">
    <interactant intactId="EBI-2908273">
        <id>Q96S52</id>
    </interactant>
    <interactant intactId="EBI-12196745">
        <id>Q3LHN2</id>
        <label>KRTAP19-2</label>
    </interactant>
    <organismsDiffer>false</organismsDiffer>
    <experiments>3</experiments>
</comment>
<comment type="interaction">
    <interactant intactId="EBI-2908273">
        <id>Q96S52</id>
    </interactant>
    <interactant intactId="EBI-14065470">
        <id>Q9BYR9</id>
        <label>KRTAP2-4</label>
    </interactant>
    <organismsDiffer>false</organismsDiffer>
    <experiments>3</experiments>
</comment>
<comment type="interaction">
    <interactant intactId="EBI-2908273">
        <id>Q96S52</id>
    </interactant>
    <interactant intactId="EBI-22311199">
        <id>Q3LI67</id>
        <label>KRTAP6-3</label>
    </interactant>
    <organismsDiffer>false</organismsDiffer>
    <experiments>3</experiments>
</comment>
<comment type="interaction">
    <interactant intactId="EBI-2908273">
        <id>Q96S52</id>
    </interactant>
    <interactant intactId="EBI-1044640">
        <id>Q9BYQ4</id>
        <label>KRTAP9-2</label>
    </interactant>
    <organismsDiffer>false</organismsDiffer>
    <experiments>3</experiments>
</comment>
<comment type="interaction">
    <interactant intactId="EBI-2908273">
        <id>Q96S52</id>
    </interactant>
    <interactant intactId="EBI-945833">
        <id>Q7Z3S9</id>
        <label>NOTCH2NLA</label>
    </interactant>
    <organismsDiffer>false</organismsDiffer>
    <experiments>3</experiments>
</comment>
<comment type="interaction">
    <interactant intactId="EBI-2908273">
        <id>Q96S52</id>
    </interactant>
    <interactant intactId="EBI-22310682">
        <id>P0DPK4</id>
        <label>NOTCH2NLC</label>
    </interactant>
    <organismsDiffer>false</organismsDiffer>
    <experiments>3</experiments>
</comment>
<comment type="interaction">
    <interactant intactId="EBI-2908273">
        <id>Q96S52</id>
    </interactant>
    <interactant intactId="EBI-726383">
        <id>Q969N2</id>
        <label>PIGT</label>
    </interactant>
    <organismsDiffer>false</organismsDiffer>
    <experiments>13</experiments>
</comment>
<comment type="interaction">
    <interactant intactId="EBI-2908273">
        <id>Q96S52</id>
    </interactant>
    <interactant intactId="EBI-742327">
        <id>Q15654</id>
        <label>TRIP6</label>
    </interactant>
    <organismsDiffer>false</organismsDiffer>
    <experiments>3</experiments>
</comment>
<comment type="subcellular location">
    <subcellularLocation>
        <location evidence="11 12">Endoplasmic reticulum membrane</location>
        <topology evidence="6 7">Multi-pass membrane protein</topology>
    </subcellularLocation>
</comment>
<comment type="alternative products">
    <event type="alternative splicing"/>
    <isoform>
        <id>Q96S52-1</id>
        <name>1</name>
        <sequence type="displayed"/>
    </isoform>
    <isoform>
        <id>Q96S52-2</id>
        <name>2</name>
        <sequence type="described" ref="VSP_013158"/>
    </isoform>
</comment>
<comment type="disease" evidence="4">
    <disease id="DI-05347">
        <name>Glycosylphosphatidylinositol biosynthesis defect 18</name>
        <acronym>GPIBD18</acronym>
        <description>An autosomal recessive disorder with onset in utero or early infancy and characterized by severe global developmental delay, seizures, hypotonia, weakness, ataxia, and dysmorphic facial features.</description>
        <dbReference type="MIM" id="618143"/>
    </disease>
    <text>The disease is caused by variants affecting the gene represented in this entry.</text>
</comment>
<comment type="similarity">
    <text evidence="10">Belongs to the PIGS family.</text>
</comment>
<reference key="1">
    <citation type="journal article" date="2001" name="EMBO J.">
        <title>PIG-S and PIG-T, essential for GPI anchor attachment to proteins, form a complex with GAA1 and GPI8.</title>
        <authorList>
            <person name="Ohishi K."/>
            <person name="Inoue N."/>
            <person name="Kinoshita T."/>
        </authorList>
    </citation>
    <scope>NUCLEOTIDE SEQUENCE [MRNA] (ISOFORM 1)</scope>
    <scope>PROTEIN SEQUENCE OF 2-21</scope>
    <scope>FUNCTION</scope>
    <scope>SUBUNIT</scope>
    <scope>PATHWAY</scope>
</reference>
<reference key="2">
    <citation type="journal article" date="2003" name="Genome Res.">
        <title>The secreted protein discovery initiative (SPDI), a large-scale effort to identify novel human secreted and transmembrane proteins: a bioinformatics assessment.</title>
        <authorList>
            <person name="Clark H.F."/>
            <person name="Gurney A.L."/>
            <person name="Abaya E."/>
            <person name="Baker K."/>
            <person name="Baldwin D.T."/>
            <person name="Brush J."/>
            <person name="Chen J."/>
            <person name="Chow B."/>
            <person name="Chui C."/>
            <person name="Crowley C."/>
            <person name="Currell B."/>
            <person name="Deuel B."/>
            <person name="Dowd P."/>
            <person name="Eaton D."/>
            <person name="Foster J.S."/>
            <person name="Grimaldi C."/>
            <person name="Gu Q."/>
            <person name="Hass P.E."/>
            <person name="Heldens S."/>
            <person name="Huang A."/>
            <person name="Kim H.S."/>
            <person name="Klimowski L."/>
            <person name="Jin Y."/>
            <person name="Johnson S."/>
            <person name="Lee J."/>
            <person name="Lewis L."/>
            <person name="Liao D."/>
            <person name="Mark M.R."/>
            <person name="Robbie E."/>
            <person name="Sanchez C."/>
            <person name="Schoenfeld J."/>
            <person name="Seshagiri S."/>
            <person name="Simmons L."/>
            <person name="Singh J."/>
            <person name="Smith V."/>
            <person name="Stinson J."/>
            <person name="Vagts A."/>
            <person name="Vandlen R.L."/>
            <person name="Watanabe C."/>
            <person name="Wieand D."/>
            <person name="Woods K."/>
            <person name="Xie M.-H."/>
            <person name="Yansura D.G."/>
            <person name="Yi S."/>
            <person name="Yu G."/>
            <person name="Yuan J."/>
            <person name="Zhang M."/>
            <person name="Zhang Z."/>
            <person name="Goddard A.D."/>
            <person name="Wood W.I."/>
            <person name="Godowski P.J."/>
            <person name="Gray A.M."/>
        </authorList>
    </citation>
    <scope>NUCLEOTIDE SEQUENCE [LARGE SCALE MRNA] (ISOFORM 2)</scope>
</reference>
<reference key="3">
    <citation type="journal article" date="2004" name="Genome Res.">
        <title>The status, quality, and expansion of the NIH full-length cDNA project: the Mammalian Gene Collection (MGC).</title>
        <authorList>
            <consortium name="The MGC Project Team"/>
        </authorList>
    </citation>
    <scope>NUCLEOTIDE SEQUENCE [LARGE SCALE MRNA] (ISOFORM 1)</scope>
    <source>
        <tissue>Lung</tissue>
    </source>
</reference>
<reference key="4">
    <citation type="journal article" date="2011" name="BMC Syst. Biol.">
        <title>Initial characterization of the human central proteome.</title>
        <authorList>
            <person name="Burkard T.R."/>
            <person name="Planyavsky M."/>
            <person name="Kaupe I."/>
            <person name="Breitwieser F.P."/>
            <person name="Buerckstuemmer T."/>
            <person name="Bennett K.L."/>
            <person name="Superti-Furga G."/>
            <person name="Colinge J."/>
        </authorList>
    </citation>
    <scope>IDENTIFICATION BY MASS SPECTROMETRY [LARGE SCALE ANALYSIS]</scope>
</reference>
<reference key="5">
    <citation type="journal article" date="2015" name="Proteomics">
        <title>N-terminome analysis of the human mitochondrial proteome.</title>
        <authorList>
            <person name="Vaca Jacome A.S."/>
            <person name="Rabilloud T."/>
            <person name="Schaeffer-Reiss C."/>
            <person name="Rompais M."/>
            <person name="Ayoub D."/>
            <person name="Lane L."/>
            <person name="Bairoch A."/>
            <person name="Van Dorsselaer A."/>
            <person name="Carapito C."/>
        </authorList>
    </citation>
    <scope>IDENTIFICATION BY MASS SPECTROMETRY [LARGE SCALE ANALYSIS]</scope>
</reference>
<reference key="6">
    <citation type="journal article" date="2018" name="Am. J. Hum. Genet.">
        <title>Mutations in PIGS, encoding a GPI transamidase, cause a neurological syndrome ranging from fetal akinesia to epileptic encephalopathy.</title>
        <authorList>
            <person name="Nguyen T.T.M."/>
            <person name="Murakami Y."/>
            <person name="Wigby K.M."/>
            <person name="Baratang N.V."/>
            <person name="Rousseau J."/>
            <person name="St-Denis A."/>
            <person name="Rosenfeld J.A."/>
            <person name="Laniewski S.C."/>
            <person name="Jones J."/>
            <person name="Iglesias A.D."/>
            <person name="Jones M.C."/>
            <person name="Masser-Frye D."/>
            <person name="Scheuerle A.E."/>
            <person name="Perry D.L."/>
            <person name="Taft R.J."/>
            <person name="Le Deist F."/>
            <person name="Thompson M."/>
            <person name="Kinoshita T."/>
            <person name="Campeau P.M."/>
        </authorList>
    </citation>
    <scope>INVOLVEMENT IN GPIBD18</scope>
    <scope>VARIANTS GPIBD18 PRO-34; 36-TRP--ASP-555 DEL; GLY-308 AND 439-THR--LYS-451 DELINS ARG-LEU-LEU</scope>
    <scope>CHARACTERIZATION OF VARIANTS PRO-34; 36-TRP--ASP-555 DEL</scope>
    <scope>FUNCTION</scope>
    <scope>PATHWAY</scope>
</reference>
<reference key="7">
    <citation type="journal article" date="2021" name="Molecules">
        <title>Functional analysis of the GPI transamidase complex by screening for amino acid mutations in each subunit.</title>
        <authorList>
            <person name="Liu S.S."/>
            <person name="Jin F."/>
            <person name="Liu Y.S."/>
            <person name="Murakami Y."/>
            <person name="Sugita Y."/>
            <person name="Kato T."/>
            <person name="Gao X.D."/>
            <person name="Kinoshita T."/>
            <person name="Hattori M."/>
            <person name="Fujita M."/>
        </authorList>
    </citation>
    <scope>MUTAGENESIS OF ARG-43; PRO-47; ASN-267; SER-272; TYR-276; PRO-301; PRO-335; ASN-370; SER-444; 459-ASP-ASP-460 AND 515-ASP-ASP-516</scope>
    <scope>IDENTIFICATION OF THE GPI-ANCHOR TRANSAMIDASE COMPLEX</scope>
    <scope>FUNCTION</scope>
    <scope>PATHWAY</scope>
</reference>
<reference key="8">
    <citation type="journal article" date="2006" name="Science">
        <title>The consensus coding sequences of human breast and colorectal cancers.</title>
        <authorList>
            <person name="Sjoeblom T."/>
            <person name="Jones S."/>
            <person name="Wood L.D."/>
            <person name="Parsons D.W."/>
            <person name="Lin J."/>
            <person name="Barber T.D."/>
            <person name="Mandelker D."/>
            <person name="Leary R.J."/>
            <person name="Ptak J."/>
            <person name="Silliman N."/>
            <person name="Szabo S."/>
            <person name="Buckhaults P."/>
            <person name="Farrell C."/>
            <person name="Meeh P."/>
            <person name="Markowitz S.D."/>
            <person name="Willis J."/>
            <person name="Dawson D."/>
            <person name="Willson J.K.V."/>
            <person name="Gazdar A.F."/>
            <person name="Hartigan J."/>
            <person name="Wu L."/>
            <person name="Liu C."/>
            <person name="Parmigiani G."/>
            <person name="Park B.H."/>
            <person name="Bachman K.E."/>
            <person name="Papadopoulos N."/>
            <person name="Vogelstein B."/>
            <person name="Kinzler K.W."/>
            <person name="Velculescu V.E."/>
        </authorList>
    </citation>
    <scope>VARIANT [LARGE SCALE ANALYSIS] ILE-159</scope>
</reference>
<reference evidence="16" key="9">
    <citation type="journal article" date="2022" name="Nat. Commun.">
        <title>Molecular insights into biogenesis of glycosylphosphatidylinositol anchor proteins.</title>
        <authorList>
            <person name="Xu Y."/>
            <person name="Jia G."/>
            <person name="Li T."/>
            <person name="Zhou Z."/>
            <person name="Luo Y."/>
            <person name="Chao Y."/>
            <person name="Bao J."/>
            <person name="Su Z."/>
            <person name="Qu Q."/>
            <person name="Li D."/>
        </authorList>
    </citation>
    <scope>STRUCTURE BY ELECTRON MICROSCOPY (2.53 ANGSTROMS) OF 2-555 IN COMPLEX WITH GPAA1; PIGU; PIGT AND PIGK</scope>
    <scope>IDENTIFICATION OF THE GPI-ANCHOR TRANSAMIDASE COMPLEX</scope>
    <scope>FUNCTION</scope>
    <scope>TOPOLOGY</scope>
    <scope>SUBUNIT</scope>
    <scope>SUBCELLULAR LOCATION</scope>
    <scope>GLYCOSYLATION AT ASN-267</scope>
    <scope>PATHWAY</scope>
</reference>
<reference evidence="15" key="10">
    <citation type="journal article" date="2022" name="Nat. Struct. Mol. Biol.">
        <title>Structure of human glycosylphosphatidylinositol transamidase.</title>
        <authorList>
            <person name="Zhang H."/>
            <person name="Su J."/>
            <person name="Li B."/>
            <person name="Gao Y."/>
            <person name="Liu M."/>
            <person name="He L."/>
            <person name="Xu H."/>
            <person name="Dong Y."/>
            <person name="Zhang X.C."/>
            <person name="Zhao Y."/>
        </authorList>
    </citation>
    <scope>STRUCTURE BY ELECTRON MICROSCOPY (3.10 ANGSTROMS) OF 7-539 IN COMPLEX WITH GPAA1; PIGU; PIGT AND PIGK</scope>
    <scope>IDENTIFICATION OF THE GPI-ANCHOR TRANSAMIDASE COMPLEX</scope>
    <scope>TOPOLOGY</scope>
    <scope>FUNCTION</scope>
    <scope>PATHWAY</scope>
    <scope>SUBCELLULAR LOCATION</scope>
    <scope>GLYCOSYLATION AT ASN-267</scope>
</reference>
<reference evidence="17 18" key="11">
    <citation type="journal article" date="2023" name="Nat. Commun.">
        <title>Structures of liganded glycosylphosphatidylinositol transamidase illuminate GPI-AP biogenesis.</title>
        <authorList>
            <person name="Xu Y."/>
            <person name="Li T."/>
            <person name="Zhou Z."/>
            <person name="Hong J."/>
            <person name="Chao Y."/>
            <person name="Zhu Z."/>
            <person name="Zhang Y."/>
            <person name="Qu Q."/>
            <person name="Li D."/>
        </authorList>
    </citation>
    <scope>STRUCTURE BY ELECTRON MICROSCOPY (2.85 ANGSTROMS) OF 2-555 IN COMPLEX WITH A CARDIOLIPIN; ULBP2; GPAA1; PIGU; PIGT AND PIGK</scope>
    <scope>IDENTIFICATION OF THE GPI-ANCHOR TRANSAMIDASE COMPLEX</scope>
    <scope>FUNCTION</scope>
    <scope>GLYCOSYLATION AT ASN-267</scope>
    <scope>PATHWAY</scope>
</reference>
<evidence type="ECO:0000255" key="1"/>
<evidence type="ECO:0000269" key="2">
    <source>
    </source>
</evidence>
<evidence type="ECO:0000269" key="3">
    <source>
    </source>
</evidence>
<evidence type="ECO:0000269" key="4">
    <source>
    </source>
</evidence>
<evidence type="ECO:0000269" key="5">
    <source>
    </source>
</evidence>
<evidence type="ECO:0000269" key="6">
    <source>
    </source>
</evidence>
<evidence type="ECO:0000269" key="7">
    <source>
    </source>
</evidence>
<evidence type="ECO:0000269" key="8">
    <source>
    </source>
</evidence>
<evidence type="ECO:0000303" key="9">
    <source>
    </source>
</evidence>
<evidence type="ECO:0000305" key="10"/>
<evidence type="ECO:0000305" key="11">
    <source>
    </source>
</evidence>
<evidence type="ECO:0000305" key="12">
    <source>
    </source>
</evidence>
<evidence type="ECO:0000312" key="13">
    <source>
        <dbReference type="HGNC" id="HGNC:14937"/>
    </source>
</evidence>
<evidence type="ECO:0000312" key="14">
    <source>
        <dbReference type="PDB" id="7WLD"/>
    </source>
</evidence>
<evidence type="ECO:0007744" key="15">
    <source>
        <dbReference type="PDB" id="7W72"/>
    </source>
</evidence>
<evidence type="ECO:0007744" key="16">
    <source>
        <dbReference type="PDB" id="7WLD"/>
    </source>
</evidence>
<evidence type="ECO:0007744" key="17">
    <source>
        <dbReference type="PDB" id="8IMX"/>
    </source>
</evidence>
<evidence type="ECO:0007744" key="18">
    <source>
        <dbReference type="PDB" id="8IMY"/>
    </source>
</evidence>
<evidence type="ECO:0007829" key="19">
    <source>
        <dbReference type="PDB" id="7W72"/>
    </source>
</evidence>
<evidence type="ECO:0007829" key="20">
    <source>
        <dbReference type="PDB" id="7WLD"/>
    </source>
</evidence>
<evidence type="ECO:0007829" key="21">
    <source>
        <dbReference type="PDB" id="8IMX"/>
    </source>
</evidence>
<evidence type="ECO:0007829" key="22">
    <source>
        <dbReference type="PDB" id="8IMY"/>
    </source>
</evidence>
<gene>
    <name evidence="13" type="primary">PIGS</name>
    <name type="ORF">UNQ1873/PRO4316</name>
</gene>